<protein>
    <recommendedName>
        <fullName>Virulence plasmid ParA family protein pGP5-D</fullName>
    </recommendedName>
    <alternativeName>
        <fullName>Protein P-9</fullName>
    </alternativeName>
</protein>
<name>GP5D_CHLTH</name>
<dbReference type="EMBL" id="X07547">
    <property type="protein sequence ID" value="CAA30425.1"/>
    <property type="status" value="ALT_INIT"/>
    <property type="molecule type" value="Genomic_DNA"/>
</dbReference>
<dbReference type="EMBL" id="X06707">
    <property type="protein sequence ID" value="CAA29896.1"/>
    <property type="status" value="ALT_INIT"/>
    <property type="molecule type" value="Genomic_DNA"/>
</dbReference>
<dbReference type="EMBL" id="J03321">
    <property type="protein sequence ID" value="AAA91573.1"/>
    <property type="status" value="ALT_INIT"/>
    <property type="molecule type" value="Genomic_DNA"/>
</dbReference>
<dbReference type="PIR" id="S01923">
    <property type="entry name" value="S01923"/>
</dbReference>
<dbReference type="RefSeq" id="NP_040386.1">
    <property type="nucleotide sequence ID" value="NC_001372.1"/>
</dbReference>
<dbReference type="RefSeq" id="WP_015506340.1">
    <property type="nucleotide sequence ID" value="NZ_CVNC01000027.1"/>
</dbReference>
<dbReference type="RefSeq" id="YP_001654088.1">
    <property type="nucleotide sequence ID" value="NC_010286.1"/>
</dbReference>
<dbReference type="SMR" id="P10559"/>
<dbReference type="GO" id="GO:0005524">
    <property type="term" value="F:ATP binding"/>
    <property type="evidence" value="ECO:0007669"/>
    <property type="project" value="UniProtKB-KW"/>
</dbReference>
<dbReference type="CDD" id="cd02042">
    <property type="entry name" value="ParAB_family"/>
    <property type="match status" value="1"/>
</dbReference>
<dbReference type="Gene3D" id="3.40.50.300">
    <property type="entry name" value="P-loop containing nucleotide triphosphate hydrolases"/>
    <property type="match status" value="1"/>
</dbReference>
<dbReference type="InterPro" id="IPR025669">
    <property type="entry name" value="AAA_dom"/>
</dbReference>
<dbReference type="InterPro" id="IPR050678">
    <property type="entry name" value="DNA_Partitioning_ATPase"/>
</dbReference>
<dbReference type="InterPro" id="IPR027417">
    <property type="entry name" value="P-loop_NTPase"/>
</dbReference>
<dbReference type="PANTHER" id="PTHR13696">
    <property type="entry name" value="P-LOOP CONTAINING NUCLEOSIDE TRIPHOSPHATE HYDROLASE"/>
    <property type="match status" value="1"/>
</dbReference>
<dbReference type="PANTHER" id="PTHR13696:SF52">
    <property type="entry name" value="PARA FAMILY PROTEIN CT_582"/>
    <property type="match status" value="1"/>
</dbReference>
<dbReference type="Pfam" id="PF13614">
    <property type="entry name" value="AAA_31"/>
    <property type="match status" value="1"/>
</dbReference>
<dbReference type="SUPFAM" id="SSF52540">
    <property type="entry name" value="P-loop containing nucleoside triphosphate hydrolases"/>
    <property type="match status" value="1"/>
</dbReference>
<evidence type="ECO:0000255" key="1"/>
<evidence type="ECO:0000305" key="2"/>
<sequence>MHTLVFCSFKGGTGKTTLSLNVGCNLAQFLGKKVLLADLDPQSNLSSGLGASVRSNQKGLHDIVYTSNDLKSIICETKKDSVDLIPASFLSEQFRELDIHRGPSNNLKLFLNEYCAPFYDICIIDTPPSLGGLTKEAFVAGDKLIACLTPEPFSILGLQKIREFLSSVGKPEEEHILGIALSFWDDRNSTNQMYIDIIESIYKNKLFSTKIRRDISLSRSLLKEDSVANVYPNSRAAEDILKLTHEIANILHIEYERDYSQRTT</sequence>
<keyword id="KW-0067">ATP-binding</keyword>
<keyword id="KW-0547">Nucleotide-binding</keyword>
<keyword id="KW-0614">Plasmid</keyword>
<proteinExistence type="inferred from homology"/>
<reference key="1">
    <citation type="journal article" date="1988" name="Mol. Microbiol.">
        <title>The structure of a plasmid of Chlamydia trachomatis believed to be required for growth within mammalian cells.</title>
        <authorList>
            <person name="Comanducci M."/>
            <person name="Ricci S."/>
            <person name="Ratti G."/>
        </authorList>
    </citation>
    <scope>NUCLEOTIDE SEQUENCE [GENOMIC DNA]</scope>
    <source>
        <strain>L2/434/Bu</strain>
        <plasmid>pLGV440</plasmid>
    </source>
</reference>
<reference key="2">
    <citation type="journal article" date="1988" name="Nucleic Acids Res.">
        <title>Analysis of the entire nucleotide sequence of the cryptic plasmid of Chlamydia trachomatis serovar L1. Evidence for involvement in DNA replication.</title>
        <authorList>
            <person name="Hatt C."/>
            <person name="Ward M.E."/>
            <person name="Clarke I.N."/>
        </authorList>
    </citation>
    <scope>NUCLEOTIDE SEQUENCE [GENOMIC DNA]</scope>
    <source>
        <strain>L1/440/LN</strain>
        <plasmid>pLGV440</plasmid>
    </source>
</reference>
<reference key="3">
    <citation type="journal article" date="1990" name="Plasmid">
        <title>Diversity of the Chlamydia trachomatis common plasmid in biovars with different pathogenicity.</title>
        <authorList>
            <person name="Comanducci M."/>
            <person name="Ricci S."/>
            <person name="Cevenini R."/>
            <person name="Ratti G."/>
        </authorList>
    </citation>
    <scope>NUCLEOTIDE SEQUENCE [GENOMIC DNA]</scope>
    <source>
        <strain>D/GO/86</strain>
        <plasmid>pCHL1</plasmid>
    </source>
</reference>
<feature type="chain" id="PRO_0000201990" description="Virulence plasmid ParA family protein pGP5-D">
    <location>
        <begin position="1"/>
        <end position="264"/>
    </location>
</feature>
<feature type="binding site" evidence="1">
    <location>
        <begin position="9"/>
        <end position="16"/>
    </location>
    <ligand>
        <name>ATP</name>
        <dbReference type="ChEBI" id="CHEBI:30616"/>
    </ligand>
</feature>
<feature type="sequence variant" description="In plasmid pCHL1.">
    <original>N</original>
    <variation>D</variation>
    <location>
        <position position="56"/>
    </location>
</feature>
<feature type="sequence variant" description="In plasmid pCHL1.">
    <original>L</original>
    <variation>S</variation>
    <location>
        <position position="90"/>
    </location>
</feature>
<geneLocation type="plasmid">
    <name>pLGV440</name>
</geneLocation>
<geneLocation type="plasmid">
    <name>pCHL1</name>
</geneLocation>
<comment type="function">
    <text>Required for growth within mammalian cells.</text>
</comment>
<comment type="miscellaneous">
    <text>The sequence shown is that of plasmid pLGV440.</text>
</comment>
<comment type="similarity">
    <text evidence="2">Belongs to the ParA family.</text>
</comment>
<comment type="sequence caution" evidence="2">
    <conflict type="erroneous initiation">
        <sequence resource="EMBL-CDS" id="AAA91573"/>
    </conflict>
</comment>
<comment type="sequence caution" evidence="2">
    <conflict type="erroneous initiation">
        <sequence resource="EMBL-CDS" id="CAA29896"/>
    </conflict>
</comment>
<comment type="sequence caution" evidence="2">
    <conflict type="erroneous initiation">
        <sequence resource="EMBL-CDS" id="CAA30425"/>
    </conflict>
</comment>
<accession>P10559</accession>
<accession>P08786</accession>
<organism>
    <name type="scientific">Chlamydia trachomatis</name>
    <dbReference type="NCBI Taxonomy" id="813"/>
    <lineage>
        <taxon>Bacteria</taxon>
        <taxon>Pseudomonadati</taxon>
        <taxon>Chlamydiota</taxon>
        <taxon>Chlamydiia</taxon>
        <taxon>Chlamydiales</taxon>
        <taxon>Chlamydiaceae</taxon>
        <taxon>Chlamydia/Chlamydophila group</taxon>
        <taxon>Chlamydia</taxon>
    </lineage>
</organism>